<protein>
    <recommendedName>
        <fullName evidence="2">Uncharacterized metal-dependent hydrolase MJ0761</fullName>
        <ecNumber evidence="2">3.1.-.-</ecNumber>
    </recommendedName>
</protein>
<evidence type="ECO:0000250" key="1">
    <source>
        <dbReference type="UniProtKB" id="P0AFQ7"/>
    </source>
</evidence>
<evidence type="ECO:0000305" key="2"/>
<dbReference type="EC" id="3.1.-.-" evidence="2"/>
<dbReference type="EMBL" id="L77117">
    <property type="protein sequence ID" value="AAB98752.1"/>
    <property type="molecule type" value="Genomic_DNA"/>
</dbReference>
<dbReference type="PIR" id="A64395">
    <property type="entry name" value="A64395"/>
</dbReference>
<dbReference type="RefSeq" id="WP_010870266.1">
    <property type="nucleotide sequence ID" value="NC_000909.1"/>
</dbReference>
<dbReference type="SMR" id="Q58171"/>
<dbReference type="STRING" id="243232.MJ_0761"/>
<dbReference type="PaxDb" id="243232-MJ_0761"/>
<dbReference type="EnsemblBacteria" id="AAB98752">
    <property type="protein sequence ID" value="AAB98752"/>
    <property type="gene ID" value="MJ_0761"/>
</dbReference>
<dbReference type="GeneID" id="1451638"/>
<dbReference type="KEGG" id="mja:MJ_0761"/>
<dbReference type="eggNOG" id="arCOG00892">
    <property type="taxonomic scope" value="Archaea"/>
</dbReference>
<dbReference type="HOGENOM" id="CLU_061552_1_0_2"/>
<dbReference type="InParanoid" id="Q58171"/>
<dbReference type="OrthoDB" id="359310at2157"/>
<dbReference type="PhylomeDB" id="Q58171"/>
<dbReference type="Proteomes" id="UP000000805">
    <property type="component" value="Chromosome"/>
</dbReference>
<dbReference type="GO" id="GO:0016788">
    <property type="term" value="F:hydrolase activity, acting on ester bonds"/>
    <property type="evidence" value="ECO:0007669"/>
    <property type="project" value="InterPro"/>
</dbReference>
<dbReference type="GO" id="GO:0046872">
    <property type="term" value="F:metal ion binding"/>
    <property type="evidence" value="ECO:0007669"/>
    <property type="project" value="UniProtKB-KW"/>
</dbReference>
<dbReference type="Gene3D" id="3.20.20.140">
    <property type="entry name" value="Metal-dependent hydrolases"/>
    <property type="match status" value="1"/>
</dbReference>
<dbReference type="InterPro" id="IPR018228">
    <property type="entry name" value="DNase_TatD-rel_CS"/>
</dbReference>
<dbReference type="InterPro" id="IPR032466">
    <property type="entry name" value="Metal_Hydrolase"/>
</dbReference>
<dbReference type="InterPro" id="IPR001130">
    <property type="entry name" value="TatD-like"/>
</dbReference>
<dbReference type="InterPro" id="IPR012022">
    <property type="entry name" value="UCP005295"/>
</dbReference>
<dbReference type="PANTHER" id="PTHR42658">
    <property type="entry name" value="HYDROLASE TATD"/>
    <property type="match status" value="1"/>
</dbReference>
<dbReference type="PANTHER" id="PTHR42658:SF1">
    <property type="entry name" value="HYDROLASE TATD"/>
    <property type="match status" value="1"/>
</dbReference>
<dbReference type="Pfam" id="PF01026">
    <property type="entry name" value="TatD_DNase"/>
    <property type="match status" value="1"/>
</dbReference>
<dbReference type="PIRSF" id="PIRSF005295">
    <property type="entry name" value="UCP005295_TatD"/>
    <property type="match status" value="1"/>
</dbReference>
<dbReference type="SUPFAM" id="SSF51556">
    <property type="entry name" value="Metallo-dependent hydrolases"/>
    <property type="match status" value="1"/>
</dbReference>
<dbReference type="PROSITE" id="PS01137">
    <property type="entry name" value="TATD_1"/>
    <property type="match status" value="1"/>
</dbReference>
<gene>
    <name type="ordered locus">MJ0761</name>
</gene>
<feature type="chain" id="PRO_0000202011" description="Uncharacterized metal-dependent hydrolase MJ0761">
    <location>
        <begin position="1"/>
        <end position="251"/>
    </location>
</feature>
<feature type="binding site" evidence="1">
    <location>
        <position position="5"/>
    </location>
    <ligand>
        <name>a divalent metal cation</name>
        <dbReference type="ChEBI" id="CHEBI:60240"/>
        <label>1</label>
    </ligand>
</feature>
<feature type="binding site" evidence="1">
    <location>
        <position position="7"/>
    </location>
    <ligand>
        <name>a divalent metal cation</name>
        <dbReference type="ChEBI" id="CHEBI:60240"/>
        <label>1</label>
    </ligand>
</feature>
<feature type="binding site" evidence="1">
    <location>
        <position position="101"/>
    </location>
    <ligand>
        <name>a divalent metal cation</name>
        <dbReference type="ChEBI" id="CHEBI:60240"/>
        <label>1</label>
    </ligand>
</feature>
<feature type="binding site" evidence="1">
    <location>
        <position position="101"/>
    </location>
    <ligand>
        <name>a divalent metal cation</name>
        <dbReference type="ChEBI" id="CHEBI:60240"/>
        <label>2</label>
    </ligand>
</feature>
<feature type="binding site" evidence="1">
    <location>
        <position position="132"/>
    </location>
    <ligand>
        <name>a divalent metal cation</name>
        <dbReference type="ChEBI" id="CHEBI:60240"/>
        <label>2</label>
    </ligand>
</feature>
<feature type="binding site" evidence="1">
    <location>
        <position position="163"/>
    </location>
    <ligand>
        <name>a divalent metal cation</name>
        <dbReference type="ChEBI" id="CHEBI:60240"/>
        <label>2</label>
    </ligand>
</feature>
<feature type="binding site" evidence="1">
    <location>
        <position position="209"/>
    </location>
    <ligand>
        <name>a divalent metal cation</name>
        <dbReference type="ChEBI" id="CHEBI:60240"/>
        <label>1</label>
    </ligand>
</feature>
<accession>Q58171</accession>
<proteinExistence type="inferred from homology"/>
<sequence>MIDAHTHLDVRSFEDLEKMALSGIETIITCAHDPYKMSTPEVYLDHWDRLINLEVKRGEMAGVEVKVAVGVHPMGYPKNWEVLIKKLPEFLDNENVVAIGETGLHYLTEDEKNLLREQLYLAKDYNMPIIIHTPEKNKKEALIEILKILDEVKIKDSLVMIDHINKETVDLIDRDVYVGLTVQPSMKLTHEEAAEIIKNYNKKFILSSDLGSLKADIYALPRTKLYMKNIGVDEEKIIASVYKNAKGFYRL</sequence>
<organism>
    <name type="scientific">Methanocaldococcus jannaschii (strain ATCC 43067 / DSM 2661 / JAL-1 / JCM 10045 / NBRC 100440)</name>
    <name type="common">Methanococcus jannaschii</name>
    <dbReference type="NCBI Taxonomy" id="243232"/>
    <lineage>
        <taxon>Archaea</taxon>
        <taxon>Methanobacteriati</taxon>
        <taxon>Methanobacteriota</taxon>
        <taxon>Methanomada group</taxon>
        <taxon>Methanococci</taxon>
        <taxon>Methanococcales</taxon>
        <taxon>Methanocaldococcaceae</taxon>
        <taxon>Methanocaldococcus</taxon>
    </lineage>
</organism>
<comment type="cofactor">
    <cofactor evidence="1">
        <name>a divalent metal cation</name>
        <dbReference type="ChEBI" id="CHEBI:60240"/>
    </cofactor>
    <text evidence="1">Binds 2 divalent metal cations per subunit.</text>
</comment>
<comment type="similarity">
    <text evidence="2">Belongs to the metallo-dependent hydrolases superfamily. TatD-type hydrolase family.</text>
</comment>
<reference key="1">
    <citation type="journal article" date="1996" name="Science">
        <title>Complete genome sequence of the methanogenic archaeon, Methanococcus jannaschii.</title>
        <authorList>
            <person name="Bult C.J."/>
            <person name="White O."/>
            <person name="Olsen G.J."/>
            <person name="Zhou L."/>
            <person name="Fleischmann R.D."/>
            <person name="Sutton G.G."/>
            <person name="Blake J.A."/>
            <person name="FitzGerald L.M."/>
            <person name="Clayton R.A."/>
            <person name="Gocayne J.D."/>
            <person name="Kerlavage A.R."/>
            <person name="Dougherty B.A."/>
            <person name="Tomb J.-F."/>
            <person name="Adams M.D."/>
            <person name="Reich C.I."/>
            <person name="Overbeek R."/>
            <person name="Kirkness E.F."/>
            <person name="Weinstock K.G."/>
            <person name="Merrick J.M."/>
            <person name="Glodek A."/>
            <person name="Scott J.L."/>
            <person name="Geoghagen N.S.M."/>
            <person name="Weidman J.F."/>
            <person name="Fuhrmann J.L."/>
            <person name="Nguyen D."/>
            <person name="Utterback T.R."/>
            <person name="Kelley J.M."/>
            <person name="Peterson J.D."/>
            <person name="Sadow P.W."/>
            <person name="Hanna M.C."/>
            <person name="Cotton M.D."/>
            <person name="Roberts K.M."/>
            <person name="Hurst M.A."/>
            <person name="Kaine B.P."/>
            <person name="Borodovsky M."/>
            <person name="Klenk H.-P."/>
            <person name="Fraser C.M."/>
            <person name="Smith H.O."/>
            <person name="Woese C.R."/>
            <person name="Venter J.C."/>
        </authorList>
    </citation>
    <scope>NUCLEOTIDE SEQUENCE [LARGE SCALE GENOMIC DNA]</scope>
    <source>
        <strain>ATCC 43067 / DSM 2661 / JAL-1 / JCM 10045 / NBRC 100440</strain>
    </source>
</reference>
<keyword id="KW-0378">Hydrolase</keyword>
<keyword id="KW-0479">Metal-binding</keyword>
<keyword id="KW-1185">Reference proteome</keyword>
<name>Y761_METJA</name>